<name>MCM5_DICDI</name>
<comment type="function">
    <text evidence="1">Acts as a component of the MCM2-7 complex (MCM complex) which is the replicative helicase essential for 'once per cell cycle' DNA replication initiation and elongation in eukaryotic cells. Core component of CDC45-MCM-GINS (CMG) helicase, the molecular machine that unwinds template DNA during replication, and around which the replisome is built. The active ATPase sites in the MCM2-7 ring are formed through the interaction surfaces of two neighboring subunits such that a critical structure of a conserved arginine finger motif is provided in trans relative to the ATP-binding site of the Walker A box of the adjacent subunit. The six ATPase active sites, however, are likely to contribute differentially to the complex helicase activity.</text>
</comment>
<comment type="catalytic activity">
    <reaction evidence="1">
        <text>ATP + H2O = ADP + phosphate + H(+)</text>
        <dbReference type="Rhea" id="RHEA:13065"/>
        <dbReference type="ChEBI" id="CHEBI:15377"/>
        <dbReference type="ChEBI" id="CHEBI:15378"/>
        <dbReference type="ChEBI" id="CHEBI:30616"/>
        <dbReference type="ChEBI" id="CHEBI:43474"/>
        <dbReference type="ChEBI" id="CHEBI:456216"/>
        <dbReference type="EC" id="3.6.4.12"/>
    </reaction>
    <physiologicalReaction direction="left-to-right" evidence="1">
        <dbReference type="Rhea" id="RHEA:13066"/>
    </physiologicalReaction>
</comment>
<comment type="subunit">
    <text>Component of the MCM2-7 complex. The complex forms a toroidal hexameric ring with the proposed subunit order MCM2-MCM6-MCM4-MCM7-MCM3-MCM5 (By simililarity).</text>
</comment>
<comment type="subcellular location">
    <subcellularLocation>
        <location evidence="1">Nucleus</location>
    </subcellularLocation>
    <subcellularLocation>
        <location evidence="1">Cytoplasm</location>
        <location evidence="1">Cytosol</location>
    </subcellularLocation>
</comment>
<comment type="similarity">
    <text evidence="4">Belongs to the MCM family.</text>
</comment>
<dbReference type="EC" id="3.6.4.12"/>
<dbReference type="EMBL" id="AAFI02000197">
    <property type="protein sequence ID" value="EAL61028.1"/>
    <property type="molecule type" value="Genomic_DNA"/>
</dbReference>
<dbReference type="RefSeq" id="XP_629372.1">
    <property type="nucleotide sequence ID" value="XM_629370.1"/>
</dbReference>
<dbReference type="SMR" id="Q54CP4"/>
<dbReference type="FunCoup" id="Q54CP4">
    <property type="interactions" value="827"/>
</dbReference>
<dbReference type="STRING" id="44689.Q54CP4"/>
<dbReference type="PaxDb" id="44689-DDB0232354"/>
<dbReference type="EnsemblProtists" id="EAL61028">
    <property type="protein sequence ID" value="EAL61028"/>
    <property type="gene ID" value="DDB_G0292958"/>
</dbReference>
<dbReference type="GeneID" id="8628890"/>
<dbReference type="KEGG" id="ddi:DDB_G0292958"/>
<dbReference type="dictyBase" id="DDB_G0292958">
    <property type="gene designation" value="mcm5"/>
</dbReference>
<dbReference type="VEuPathDB" id="AmoebaDB:DDB_G0292958"/>
<dbReference type="eggNOG" id="KOG0481">
    <property type="taxonomic scope" value="Eukaryota"/>
</dbReference>
<dbReference type="HOGENOM" id="CLU_000995_7_2_1"/>
<dbReference type="InParanoid" id="Q54CP4"/>
<dbReference type="OMA" id="ITYCKTR"/>
<dbReference type="PhylomeDB" id="Q54CP4"/>
<dbReference type="Reactome" id="R-DDI-68867">
    <property type="pathway name" value="Assembly of the pre-replicative complex"/>
</dbReference>
<dbReference type="Reactome" id="R-DDI-68962">
    <property type="pathway name" value="Activation of the pre-replicative complex"/>
</dbReference>
<dbReference type="Reactome" id="R-DDI-69052">
    <property type="pathway name" value="Switching of origins to a post-replicative state"/>
</dbReference>
<dbReference type="PRO" id="PR:Q54CP4"/>
<dbReference type="Proteomes" id="UP000002195">
    <property type="component" value="Chromosome 6"/>
</dbReference>
<dbReference type="GO" id="GO:0005829">
    <property type="term" value="C:cytosol"/>
    <property type="evidence" value="ECO:0007669"/>
    <property type="project" value="UniProtKB-SubCell"/>
</dbReference>
<dbReference type="GO" id="GO:0042555">
    <property type="term" value="C:MCM complex"/>
    <property type="evidence" value="ECO:0000250"/>
    <property type="project" value="dictyBase"/>
</dbReference>
<dbReference type="GO" id="GO:0005634">
    <property type="term" value="C:nucleus"/>
    <property type="evidence" value="ECO:0000318"/>
    <property type="project" value="GO_Central"/>
</dbReference>
<dbReference type="GO" id="GO:0005524">
    <property type="term" value="F:ATP binding"/>
    <property type="evidence" value="ECO:0007669"/>
    <property type="project" value="UniProtKB-KW"/>
</dbReference>
<dbReference type="GO" id="GO:0016887">
    <property type="term" value="F:ATP hydrolysis activity"/>
    <property type="evidence" value="ECO:0007669"/>
    <property type="project" value="RHEA"/>
</dbReference>
<dbReference type="GO" id="GO:0003688">
    <property type="term" value="F:DNA replication origin binding"/>
    <property type="evidence" value="ECO:0007669"/>
    <property type="project" value="InterPro"/>
</dbReference>
<dbReference type="GO" id="GO:0004386">
    <property type="term" value="F:helicase activity"/>
    <property type="evidence" value="ECO:0007669"/>
    <property type="project" value="UniProtKB-KW"/>
</dbReference>
<dbReference type="GO" id="GO:0003697">
    <property type="term" value="F:single-stranded DNA binding"/>
    <property type="evidence" value="ECO:0000318"/>
    <property type="project" value="GO_Central"/>
</dbReference>
<dbReference type="GO" id="GO:0006270">
    <property type="term" value="P:DNA replication initiation"/>
    <property type="evidence" value="ECO:0000318"/>
    <property type="project" value="GO_Central"/>
</dbReference>
<dbReference type="GO" id="GO:0000727">
    <property type="term" value="P:double-strand break repair via break-induced replication"/>
    <property type="evidence" value="ECO:0000318"/>
    <property type="project" value="GO_Central"/>
</dbReference>
<dbReference type="CDD" id="cd17756">
    <property type="entry name" value="MCM5"/>
    <property type="match status" value="1"/>
</dbReference>
<dbReference type="FunFam" id="2.20.28.10:FF:000037">
    <property type="entry name" value="DNA helicase"/>
    <property type="match status" value="1"/>
</dbReference>
<dbReference type="FunFam" id="3.30.1640.10:FF:000006">
    <property type="entry name" value="DNA helicase"/>
    <property type="match status" value="1"/>
</dbReference>
<dbReference type="FunFam" id="3.40.50.300:FF:000929">
    <property type="entry name" value="DNA helicase"/>
    <property type="match status" value="1"/>
</dbReference>
<dbReference type="Gene3D" id="2.20.28.10">
    <property type="match status" value="1"/>
</dbReference>
<dbReference type="Gene3D" id="3.30.1640.10">
    <property type="entry name" value="mini-chromosome maintenance (MCM) complex, chain A, domain 1"/>
    <property type="match status" value="1"/>
</dbReference>
<dbReference type="Gene3D" id="2.40.50.140">
    <property type="entry name" value="Nucleic acid-binding proteins"/>
    <property type="match status" value="1"/>
</dbReference>
<dbReference type="Gene3D" id="3.40.50.300">
    <property type="entry name" value="P-loop containing nucleotide triphosphate hydrolases"/>
    <property type="match status" value="1"/>
</dbReference>
<dbReference type="InterPro" id="IPR031327">
    <property type="entry name" value="MCM"/>
</dbReference>
<dbReference type="InterPro" id="IPR008048">
    <property type="entry name" value="MCM5"/>
</dbReference>
<dbReference type="InterPro" id="IPR054125">
    <property type="entry name" value="MCM5_C"/>
</dbReference>
<dbReference type="InterPro" id="IPR018525">
    <property type="entry name" value="MCM_CS"/>
</dbReference>
<dbReference type="InterPro" id="IPR001208">
    <property type="entry name" value="MCM_dom"/>
</dbReference>
<dbReference type="InterPro" id="IPR041562">
    <property type="entry name" value="MCM_lid"/>
</dbReference>
<dbReference type="InterPro" id="IPR027925">
    <property type="entry name" value="MCM_N"/>
</dbReference>
<dbReference type="InterPro" id="IPR033762">
    <property type="entry name" value="MCM_OB"/>
</dbReference>
<dbReference type="InterPro" id="IPR012340">
    <property type="entry name" value="NA-bd_OB-fold"/>
</dbReference>
<dbReference type="InterPro" id="IPR027417">
    <property type="entry name" value="P-loop_NTPase"/>
</dbReference>
<dbReference type="PANTHER" id="PTHR11630">
    <property type="entry name" value="DNA REPLICATION LICENSING FACTOR MCM FAMILY MEMBER"/>
    <property type="match status" value="1"/>
</dbReference>
<dbReference type="PANTHER" id="PTHR11630:SF42">
    <property type="entry name" value="DNA REPLICATION LICENSING FACTOR MCM5"/>
    <property type="match status" value="1"/>
</dbReference>
<dbReference type="Pfam" id="PF00493">
    <property type="entry name" value="MCM"/>
    <property type="match status" value="1"/>
</dbReference>
<dbReference type="Pfam" id="PF21933">
    <property type="entry name" value="MCM5_C"/>
    <property type="match status" value="1"/>
</dbReference>
<dbReference type="Pfam" id="PF17855">
    <property type="entry name" value="MCM_lid"/>
    <property type="match status" value="1"/>
</dbReference>
<dbReference type="Pfam" id="PF14551">
    <property type="entry name" value="MCM_N"/>
    <property type="match status" value="1"/>
</dbReference>
<dbReference type="Pfam" id="PF17207">
    <property type="entry name" value="MCM_OB"/>
    <property type="match status" value="1"/>
</dbReference>
<dbReference type="PRINTS" id="PR01657">
    <property type="entry name" value="MCMFAMILY"/>
</dbReference>
<dbReference type="PRINTS" id="PR01661">
    <property type="entry name" value="MCMPROTEIN5"/>
</dbReference>
<dbReference type="SMART" id="SM00350">
    <property type="entry name" value="MCM"/>
    <property type="match status" value="1"/>
</dbReference>
<dbReference type="SUPFAM" id="SSF50249">
    <property type="entry name" value="Nucleic acid-binding proteins"/>
    <property type="match status" value="1"/>
</dbReference>
<dbReference type="SUPFAM" id="SSF52540">
    <property type="entry name" value="P-loop containing nucleoside triphosphate hydrolases"/>
    <property type="match status" value="1"/>
</dbReference>
<dbReference type="PROSITE" id="PS00847">
    <property type="entry name" value="MCM_1"/>
    <property type="match status" value="1"/>
</dbReference>
<dbReference type="PROSITE" id="PS50051">
    <property type="entry name" value="MCM_2"/>
    <property type="match status" value="1"/>
</dbReference>
<sequence length="757" mass="84221">MSGFDEGNVTVSGGGGKGGFKKNNGFVEDTSVRDLFKRFINEWKDQDNVFIYKEQLRQHYNLGWHYIEVSIDHLTDFNQELSGRFISSPNELMPSFEDAIKDIIKEMNYNKEQVDEDIQILFKSSANPEPIRYLRAGLISKLVKVQGIVISASRTQPKPSTMVVKCKNCQHTQTLHIRPGIVSSVLPQQCERGSNDAGKPCPNNPYVVLSDQSTFVNQQILKLQESPETIPTGEMPRHIILSLDKSLADKITPGTRIKVLGVLGIFEGGGKRREIAGGTIRTNYLRVLGITSDNAGRDSMHFTPSEEQSFKVFSRRQDLRNIIASSIAPSIYGHEDIKRAISCQLFGGSSKKLPDKMRLRGDINLLLLGDPGTAKSQLLKFVEKVAPISVYTSGKGSSAAGLTASVIREPSTGEYYLEGGAMVVADGGVVCIDEFDKMNVDDRVAIHEAMEQQTISIAKAGITTILNSRTSVLAAANPVYGRYNDAADDNINFQSTILSRFDLIFIVKDPKNEKRDFIISKHVINIHEKSSRSGGSGSVGNNTYDLSNTVVDDSHIGENEVTIQYLKKYIAYARSRISPRLSEDAVTTLKNHYVSVRAKSKEQEMINNGSYGGGGSKNSVETERKKRKNAIPITVRQLEAIIRISESLAKMSLSPIATNEHAKEAIRLFDISTFDAITTNNTVNETLTPERLENIRTAEKYLKDRVPIGSSIRIKDVRFQLSRSGLDHFTILKAVDILVGRDEFEFRNQKRTLFRKQ</sequence>
<accession>Q54CP4</accession>
<evidence type="ECO:0000250" key="1">
    <source>
        <dbReference type="UniProtKB" id="P33992"/>
    </source>
</evidence>
<evidence type="ECO:0000255" key="2"/>
<evidence type="ECO:0000256" key="3">
    <source>
        <dbReference type="SAM" id="MobiDB-lite"/>
    </source>
</evidence>
<evidence type="ECO:0000305" key="4"/>
<protein>
    <recommendedName>
        <fullName>DNA replication licensing factor mcm5</fullName>
        <ecNumber>3.6.4.12</ecNumber>
    </recommendedName>
</protein>
<reference key="1">
    <citation type="journal article" date="2005" name="Nature">
        <title>The genome of the social amoeba Dictyostelium discoideum.</title>
        <authorList>
            <person name="Eichinger L."/>
            <person name="Pachebat J.A."/>
            <person name="Gloeckner G."/>
            <person name="Rajandream M.A."/>
            <person name="Sucgang R."/>
            <person name="Berriman M."/>
            <person name="Song J."/>
            <person name="Olsen R."/>
            <person name="Szafranski K."/>
            <person name="Xu Q."/>
            <person name="Tunggal B."/>
            <person name="Kummerfeld S."/>
            <person name="Madera M."/>
            <person name="Konfortov B.A."/>
            <person name="Rivero F."/>
            <person name="Bankier A.T."/>
            <person name="Lehmann R."/>
            <person name="Hamlin N."/>
            <person name="Davies R."/>
            <person name="Gaudet P."/>
            <person name="Fey P."/>
            <person name="Pilcher K."/>
            <person name="Chen G."/>
            <person name="Saunders D."/>
            <person name="Sodergren E.J."/>
            <person name="Davis P."/>
            <person name="Kerhornou A."/>
            <person name="Nie X."/>
            <person name="Hall N."/>
            <person name="Anjard C."/>
            <person name="Hemphill L."/>
            <person name="Bason N."/>
            <person name="Farbrother P."/>
            <person name="Desany B."/>
            <person name="Just E."/>
            <person name="Morio T."/>
            <person name="Rost R."/>
            <person name="Churcher C.M."/>
            <person name="Cooper J."/>
            <person name="Haydock S."/>
            <person name="van Driessche N."/>
            <person name="Cronin A."/>
            <person name="Goodhead I."/>
            <person name="Muzny D.M."/>
            <person name="Mourier T."/>
            <person name="Pain A."/>
            <person name="Lu M."/>
            <person name="Harper D."/>
            <person name="Lindsay R."/>
            <person name="Hauser H."/>
            <person name="James K.D."/>
            <person name="Quiles M."/>
            <person name="Madan Babu M."/>
            <person name="Saito T."/>
            <person name="Buchrieser C."/>
            <person name="Wardroper A."/>
            <person name="Felder M."/>
            <person name="Thangavelu M."/>
            <person name="Johnson D."/>
            <person name="Knights A."/>
            <person name="Loulseged H."/>
            <person name="Mungall K.L."/>
            <person name="Oliver K."/>
            <person name="Price C."/>
            <person name="Quail M.A."/>
            <person name="Urushihara H."/>
            <person name="Hernandez J."/>
            <person name="Rabbinowitsch E."/>
            <person name="Steffen D."/>
            <person name="Sanders M."/>
            <person name="Ma J."/>
            <person name="Kohara Y."/>
            <person name="Sharp S."/>
            <person name="Simmonds M.N."/>
            <person name="Spiegler S."/>
            <person name="Tivey A."/>
            <person name="Sugano S."/>
            <person name="White B."/>
            <person name="Walker D."/>
            <person name="Woodward J.R."/>
            <person name="Winckler T."/>
            <person name="Tanaka Y."/>
            <person name="Shaulsky G."/>
            <person name="Schleicher M."/>
            <person name="Weinstock G.M."/>
            <person name="Rosenthal A."/>
            <person name="Cox E.C."/>
            <person name="Chisholm R.L."/>
            <person name="Gibbs R.A."/>
            <person name="Loomis W.F."/>
            <person name="Platzer M."/>
            <person name="Kay R.R."/>
            <person name="Williams J.G."/>
            <person name="Dear P.H."/>
            <person name="Noegel A.A."/>
            <person name="Barrell B.G."/>
            <person name="Kuspa A."/>
        </authorList>
    </citation>
    <scope>NUCLEOTIDE SEQUENCE [LARGE SCALE GENOMIC DNA]</scope>
    <source>
        <strain>AX4</strain>
    </source>
</reference>
<feature type="chain" id="PRO_0000328207" description="DNA replication licensing factor mcm5">
    <location>
        <begin position="1"/>
        <end position="757"/>
    </location>
</feature>
<feature type="domain" description="MCM" evidence="2">
    <location>
        <begin position="319"/>
        <end position="523"/>
    </location>
</feature>
<feature type="region of interest" description="Disordered" evidence="3">
    <location>
        <begin position="606"/>
        <end position="625"/>
    </location>
</feature>
<feature type="short sequence motif" description="Arginine finger">
    <location>
        <begin position="499"/>
        <end position="502"/>
    </location>
</feature>
<keyword id="KW-0067">ATP-binding</keyword>
<keyword id="KW-0131">Cell cycle</keyword>
<keyword id="KW-0963">Cytoplasm</keyword>
<keyword id="KW-0235">DNA replication</keyword>
<keyword id="KW-0238">DNA-binding</keyword>
<keyword id="KW-0347">Helicase</keyword>
<keyword id="KW-0378">Hydrolase</keyword>
<keyword id="KW-0547">Nucleotide-binding</keyword>
<keyword id="KW-0539">Nucleus</keyword>
<keyword id="KW-1185">Reference proteome</keyword>
<organism>
    <name type="scientific">Dictyostelium discoideum</name>
    <name type="common">Social amoeba</name>
    <dbReference type="NCBI Taxonomy" id="44689"/>
    <lineage>
        <taxon>Eukaryota</taxon>
        <taxon>Amoebozoa</taxon>
        <taxon>Evosea</taxon>
        <taxon>Eumycetozoa</taxon>
        <taxon>Dictyostelia</taxon>
        <taxon>Dictyosteliales</taxon>
        <taxon>Dictyosteliaceae</taxon>
        <taxon>Dictyostelium</taxon>
    </lineage>
</organism>
<gene>
    <name type="primary">mcm5</name>
    <name type="ORF">DDB_G0292958</name>
</gene>
<proteinExistence type="inferred from homology"/>